<gene>
    <name type="ordered locus">HPP12_1426</name>
</gene>
<sequence>MRNNKTPFLSAIFTASIRGYQRFFSAFTPSSCRFYPTCSNYALWLLYFESPLSAMGKIAIRILSCNPFCSGGIAYPVTRLKRPSLLQSHKDFNRNFKTITFWLVPTAKSRTTYYIIKV</sequence>
<evidence type="ECO:0000255" key="1">
    <source>
        <dbReference type="HAMAP-Rule" id="MF_00386"/>
    </source>
</evidence>
<comment type="function">
    <text evidence="1">Could be involved in insertion of integral membrane proteins into the membrane.</text>
</comment>
<comment type="subcellular location">
    <subcellularLocation>
        <location evidence="1">Cell inner membrane</location>
        <topology evidence="1">Peripheral membrane protein</topology>
        <orientation evidence="1">Cytoplasmic side</orientation>
    </subcellularLocation>
</comment>
<comment type="similarity">
    <text evidence="1">Belongs to the UPF0161 family.</text>
</comment>
<feature type="chain" id="PRO_1000122647" description="Putative membrane protein insertion efficiency factor">
    <location>
        <begin position="1"/>
        <end position="118"/>
    </location>
</feature>
<accession>B6JNU6</accession>
<name>YIDD_HELP2</name>
<reference key="1">
    <citation type="submission" date="2008-10" db="EMBL/GenBank/DDBJ databases">
        <title>The complete genome sequence of Helicobacter pylori strain P12.</title>
        <authorList>
            <person name="Fischer W."/>
            <person name="Windhager L."/>
            <person name="Karnholz A."/>
            <person name="Zeiller M."/>
            <person name="Zimmer R."/>
            <person name="Haas R."/>
        </authorList>
    </citation>
    <scope>NUCLEOTIDE SEQUENCE [LARGE SCALE GENOMIC DNA]</scope>
    <source>
        <strain>P12</strain>
    </source>
</reference>
<proteinExistence type="inferred from homology"/>
<keyword id="KW-0997">Cell inner membrane</keyword>
<keyword id="KW-1003">Cell membrane</keyword>
<keyword id="KW-0472">Membrane</keyword>
<organism>
    <name type="scientific">Helicobacter pylori (strain P12)</name>
    <dbReference type="NCBI Taxonomy" id="570508"/>
    <lineage>
        <taxon>Bacteria</taxon>
        <taxon>Pseudomonadati</taxon>
        <taxon>Campylobacterota</taxon>
        <taxon>Epsilonproteobacteria</taxon>
        <taxon>Campylobacterales</taxon>
        <taxon>Helicobacteraceae</taxon>
        <taxon>Helicobacter</taxon>
    </lineage>
</organism>
<dbReference type="EMBL" id="CP001217">
    <property type="protein sequence ID" value="ACJ08574.1"/>
    <property type="molecule type" value="Genomic_DNA"/>
</dbReference>
<dbReference type="KEGG" id="hpp:HPP12_1426"/>
<dbReference type="HOGENOM" id="CLU_144811_4_0_7"/>
<dbReference type="Proteomes" id="UP000008198">
    <property type="component" value="Chromosome"/>
</dbReference>
<dbReference type="GO" id="GO:0005886">
    <property type="term" value="C:plasma membrane"/>
    <property type="evidence" value="ECO:0007669"/>
    <property type="project" value="UniProtKB-SubCell"/>
</dbReference>
<dbReference type="HAMAP" id="MF_00386">
    <property type="entry name" value="UPF0161_YidD"/>
    <property type="match status" value="1"/>
</dbReference>
<dbReference type="InterPro" id="IPR002696">
    <property type="entry name" value="Membr_insert_effic_factor_YidD"/>
</dbReference>
<dbReference type="NCBIfam" id="TIGR00278">
    <property type="entry name" value="membrane protein insertion efficiency factor YidD"/>
    <property type="match status" value="1"/>
</dbReference>
<dbReference type="PANTHER" id="PTHR33383">
    <property type="entry name" value="MEMBRANE PROTEIN INSERTION EFFICIENCY FACTOR-RELATED"/>
    <property type="match status" value="1"/>
</dbReference>
<dbReference type="PANTHER" id="PTHR33383:SF1">
    <property type="entry name" value="MEMBRANE PROTEIN INSERTION EFFICIENCY FACTOR-RELATED"/>
    <property type="match status" value="1"/>
</dbReference>
<dbReference type="Pfam" id="PF01809">
    <property type="entry name" value="YidD"/>
    <property type="match status" value="1"/>
</dbReference>
<dbReference type="SMART" id="SM01234">
    <property type="entry name" value="Haemolytic"/>
    <property type="match status" value="1"/>
</dbReference>
<protein>
    <recommendedName>
        <fullName evidence="1">Putative membrane protein insertion efficiency factor</fullName>
    </recommendedName>
</protein>